<organism>
    <name type="scientific">Xanthomonas euvesicatoria pv. vesicatoria (strain 85-10)</name>
    <name type="common">Xanthomonas campestris pv. vesicatoria</name>
    <dbReference type="NCBI Taxonomy" id="316273"/>
    <lineage>
        <taxon>Bacteria</taxon>
        <taxon>Pseudomonadati</taxon>
        <taxon>Pseudomonadota</taxon>
        <taxon>Gammaproteobacteria</taxon>
        <taxon>Lysobacterales</taxon>
        <taxon>Lysobacteraceae</taxon>
        <taxon>Xanthomonas</taxon>
    </lineage>
</organism>
<feature type="chain" id="PRO_0000370173" description="3-deoxy-manno-octulosonate cytidylyltransferase">
    <location>
        <begin position="1"/>
        <end position="259"/>
    </location>
</feature>
<reference key="1">
    <citation type="journal article" date="2005" name="J. Bacteriol.">
        <title>Insights into genome plasticity and pathogenicity of the plant pathogenic Bacterium Xanthomonas campestris pv. vesicatoria revealed by the complete genome sequence.</title>
        <authorList>
            <person name="Thieme F."/>
            <person name="Koebnik R."/>
            <person name="Bekel T."/>
            <person name="Berger C."/>
            <person name="Boch J."/>
            <person name="Buettner D."/>
            <person name="Caldana C."/>
            <person name="Gaigalat L."/>
            <person name="Goesmann A."/>
            <person name="Kay S."/>
            <person name="Kirchner O."/>
            <person name="Lanz C."/>
            <person name="Linke B."/>
            <person name="McHardy A.C."/>
            <person name="Meyer F."/>
            <person name="Mittenhuber G."/>
            <person name="Nies D.H."/>
            <person name="Niesbach-Kloesgen U."/>
            <person name="Patschkowski T."/>
            <person name="Rueckert C."/>
            <person name="Rupp O."/>
            <person name="Schneiker S."/>
            <person name="Schuster S.C."/>
            <person name="Vorhoelter F.J."/>
            <person name="Weber E."/>
            <person name="Puehler A."/>
            <person name="Bonas U."/>
            <person name="Bartels D."/>
            <person name="Kaiser O."/>
        </authorList>
    </citation>
    <scope>NUCLEOTIDE SEQUENCE [LARGE SCALE GENOMIC DNA]</scope>
    <source>
        <strain>85-10</strain>
    </source>
</reference>
<comment type="function">
    <text evidence="1">Activates KDO (a required 8-carbon sugar) for incorporation into bacterial lipopolysaccharide in Gram-negative bacteria.</text>
</comment>
<comment type="catalytic activity">
    <reaction evidence="1">
        <text>3-deoxy-alpha-D-manno-oct-2-ulosonate + CTP = CMP-3-deoxy-beta-D-manno-octulosonate + diphosphate</text>
        <dbReference type="Rhea" id="RHEA:23448"/>
        <dbReference type="ChEBI" id="CHEBI:33019"/>
        <dbReference type="ChEBI" id="CHEBI:37563"/>
        <dbReference type="ChEBI" id="CHEBI:85986"/>
        <dbReference type="ChEBI" id="CHEBI:85987"/>
        <dbReference type="EC" id="2.7.7.38"/>
    </reaction>
</comment>
<comment type="pathway">
    <text evidence="1">Nucleotide-sugar biosynthesis; CMP-3-deoxy-D-manno-octulosonate biosynthesis; CMP-3-deoxy-D-manno-octulosonate from 3-deoxy-D-manno-octulosonate and CTP: step 1/1.</text>
</comment>
<comment type="pathway">
    <text evidence="1">Bacterial outer membrane biogenesis; lipopolysaccharide biosynthesis.</text>
</comment>
<comment type="subcellular location">
    <subcellularLocation>
        <location evidence="1">Cytoplasm</location>
    </subcellularLocation>
</comment>
<comment type="similarity">
    <text evidence="1">Belongs to the KdsB family.</text>
</comment>
<comment type="sequence caution" evidence="2">
    <conflict type="erroneous initiation">
        <sequence resource="EMBL-CDS" id="CAJ23933"/>
    </conflict>
</comment>
<evidence type="ECO:0000255" key="1">
    <source>
        <dbReference type="HAMAP-Rule" id="MF_00057"/>
    </source>
</evidence>
<evidence type="ECO:0000305" key="2"/>
<dbReference type="EC" id="2.7.7.38" evidence="1"/>
<dbReference type="EMBL" id="AM039952">
    <property type="protein sequence ID" value="CAJ23933.1"/>
    <property type="status" value="ALT_INIT"/>
    <property type="molecule type" value="Genomic_DNA"/>
</dbReference>
<dbReference type="RefSeq" id="WP_011347458.1">
    <property type="nucleotide sequence ID" value="NZ_CP017190.1"/>
</dbReference>
<dbReference type="SMR" id="Q3BTC6"/>
<dbReference type="STRING" id="456327.BJD11_11110"/>
<dbReference type="KEGG" id="xcv:XCV2256"/>
<dbReference type="eggNOG" id="COG1212">
    <property type="taxonomic scope" value="Bacteria"/>
</dbReference>
<dbReference type="HOGENOM" id="CLU_065038_1_0_6"/>
<dbReference type="UniPathway" id="UPA00030"/>
<dbReference type="UniPathway" id="UPA00358">
    <property type="reaction ID" value="UER00476"/>
</dbReference>
<dbReference type="Proteomes" id="UP000007069">
    <property type="component" value="Chromosome"/>
</dbReference>
<dbReference type="GO" id="GO:0005829">
    <property type="term" value="C:cytosol"/>
    <property type="evidence" value="ECO:0007669"/>
    <property type="project" value="TreeGrafter"/>
</dbReference>
<dbReference type="GO" id="GO:0008690">
    <property type="term" value="F:3-deoxy-manno-octulosonate cytidylyltransferase activity"/>
    <property type="evidence" value="ECO:0007669"/>
    <property type="project" value="UniProtKB-UniRule"/>
</dbReference>
<dbReference type="GO" id="GO:0033468">
    <property type="term" value="P:CMP-keto-3-deoxy-D-manno-octulosonic acid biosynthetic process"/>
    <property type="evidence" value="ECO:0007669"/>
    <property type="project" value="UniProtKB-UniRule"/>
</dbReference>
<dbReference type="GO" id="GO:0009103">
    <property type="term" value="P:lipopolysaccharide biosynthetic process"/>
    <property type="evidence" value="ECO:0007669"/>
    <property type="project" value="UniProtKB-UniRule"/>
</dbReference>
<dbReference type="CDD" id="cd02517">
    <property type="entry name" value="CMP-KDO-Synthetase"/>
    <property type="match status" value="1"/>
</dbReference>
<dbReference type="FunFam" id="3.90.550.10:FF:000011">
    <property type="entry name" value="3-deoxy-manno-octulosonate cytidylyltransferase"/>
    <property type="match status" value="1"/>
</dbReference>
<dbReference type="Gene3D" id="3.90.550.10">
    <property type="entry name" value="Spore Coat Polysaccharide Biosynthesis Protein SpsA, Chain A"/>
    <property type="match status" value="1"/>
</dbReference>
<dbReference type="HAMAP" id="MF_00057">
    <property type="entry name" value="KdsB"/>
    <property type="match status" value="1"/>
</dbReference>
<dbReference type="InterPro" id="IPR003329">
    <property type="entry name" value="Cytidylyl_trans"/>
</dbReference>
<dbReference type="InterPro" id="IPR004528">
    <property type="entry name" value="KdsB"/>
</dbReference>
<dbReference type="InterPro" id="IPR029044">
    <property type="entry name" value="Nucleotide-diphossugar_trans"/>
</dbReference>
<dbReference type="NCBIfam" id="TIGR00466">
    <property type="entry name" value="kdsB"/>
    <property type="match status" value="1"/>
</dbReference>
<dbReference type="NCBIfam" id="NF003952">
    <property type="entry name" value="PRK05450.1-5"/>
    <property type="match status" value="1"/>
</dbReference>
<dbReference type="PANTHER" id="PTHR42866">
    <property type="entry name" value="3-DEOXY-MANNO-OCTULOSONATE CYTIDYLYLTRANSFERASE"/>
    <property type="match status" value="1"/>
</dbReference>
<dbReference type="PANTHER" id="PTHR42866:SF2">
    <property type="entry name" value="3-DEOXY-MANNO-OCTULOSONATE CYTIDYLYLTRANSFERASE, MITOCHONDRIAL"/>
    <property type="match status" value="1"/>
</dbReference>
<dbReference type="Pfam" id="PF02348">
    <property type="entry name" value="CTP_transf_3"/>
    <property type="match status" value="1"/>
</dbReference>
<dbReference type="SUPFAM" id="SSF53448">
    <property type="entry name" value="Nucleotide-diphospho-sugar transferases"/>
    <property type="match status" value="1"/>
</dbReference>
<accession>Q3BTC6</accession>
<keyword id="KW-0963">Cytoplasm</keyword>
<keyword id="KW-0448">Lipopolysaccharide biosynthesis</keyword>
<keyword id="KW-0548">Nucleotidyltransferase</keyword>
<keyword id="KW-0808">Transferase</keyword>
<name>KDSB_XANE5</name>
<proteinExistence type="inferred from homology"/>
<protein>
    <recommendedName>
        <fullName evidence="1">3-deoxy-manno-octulosonate cytidylyltransferase</fullName>
        <ecNumber evidence="1">2.7.7.38</ecNumber>
    </recommendedName>
    <alternativeName>
        <fullName evidence="1">CMP-2-keto-3-deoxyoctulosonic acid synthase</fullName>
        <shortName evidence="1">CKS</shortName>
        <shortName evidence="1">CMP-KDO synthase</shortName>
    </alternativeName>
</protein>
<gene>
    <name evidence="1" type="primary">kdsB</name>
    <name type="ordered locus">XCV2256</name>
</gene>
<sequence length="259" mass="27977">MTPTTPADFVVAIPARYASTRLPGKPLQRIGDRPMIQHVTERALLAGAREVWVATDDARIAAAIEHLPGVHVAMTGAAHLSGTDRLAECARIAGWDDQTCVVNLQGDEPFAPAAGIRAVADLLQHSGAQMATLAAPVDNAHDLFDPNVVKLVRTAGGDALYFSRAPIPWHRDSFASQRDSVPAEGQWLRHIGIYAYRAGFLQRFAAMPPGMLERIESLEQLRVMEAGYRIAVAVTPEPFPPGIDTPDDLVRAQVRVASP</sequence>